<keyword id="KW-0997">Cell inner membrane</keyword>
<keyword id="KW-1003">Cell membrane</keyword>
<keyword id="KW-0444">Lipid biosynthesis</keyword>
<keyword id="KW-0443">Lipid metabolism</keyword>
<keyword id="KW-0472">Membrane</keyword>
<keyword id="KW-0594">Phospholipid biosynthesis</keyword>
<keyword id="KW-1208">Phospholipid metabolism</keyword>
<keyword id="KW-0808">Transferase</keyword>
<keyword id="KW-0812">Transmembrane</keyword>
<keyword id="KW-1133">Transmembrane helix</keyword>
<protein>
    <recommendedName>
        <fullName evidence="1">Glycerol-3-phosphate acyltransferase</fullName>
    </recommendedName>
    <alternativeName>
        <fullName evidence="1">G3P acyltransferase</fullName>
        <shortName evidence="1">GPAT</shortName>
        <ecNumber evidence="1">2.3.1.15</ecNumber>
        <ecNumber evidence="1">2.3.1.n5</ecNumber>
    </alternativeName>
    <alternativeName>
        <fullName evidence="1">Lysophosphatidic acid synthase</fullName>
        <shortName evidence="1">LPA synthase</shortName>
    </alternativeName>
</protein>
<gene>
    <name evidence="1" type="primary">plsY</name>
    <name type="synonym">ygiH</name>
    <name type="ordered locus">ECIAI1_3207</name>
</gene>
<reference key="1">
    <citation type="journal article" date="2009" name="PLoS Genet.">
        <title>Organised genome dynamics in the Escherichia coli species results in highly diverse adaptive paths.</title>
        <authorList>
            <person name="Touchon M."/>
            <person name="Hoede C."/>
            <person name="Tenaillon O."/>
            <person name="Barbe V."/>
            <person name="Baeriswyl S."/>
            <person name="Bidet P."/>
            <person name="Bingen E."/>
            <person name="Bonacorsi S."/>
            <person name="Bouchier C."/>
            <person name="Bouvet O."/>
            <person name="Calteau A."/>
            <person name="Chiapello H."/>
            <person name="Clermont O."/>
            <person name="Cruveiller S."/>
            <person name="Danchin A."/>
            <person name="Diard M."/>
            <person name="Dossat C."/>
            <person name="Karoui M.E."/>
            <person name="Frapy E."/>
            <person name="Garry L."/>
            <person name="Ghigo J.M."/>
            <person name="Gilles A.M."/>
            <person name="Johnson J."/>
            <person name="Le Bouguenec C."/>
            <person name="Lescat M."/>
            <person name="Mangenot S."/>
            <person name="Martinez-Jehanne V."/>
            <person name="Matic I."/>
            <person name="Nassif X."/>
            <person name="Oztas S."/>
            <person name="Petit M.A."/>
            <person name="Pichon C."/>
            <person name="Rouy Z."/>
            <person name="Ruf C.S."/>
            <person name="Schneider D."/>
            <person name="Tourret J."/>
            <person name="Vacherie B."/>
            <person name="Vallenet D."/>
            <person name="Medigue C."/>
            <person name="Rocha E.P.C."/>
            <person name="Denamur E."/>
        </authorList>
    </citation>
    <scope>NUCLEOTIDE SEQUENCE [LARGE SCALE GENOMIC DNA]</scope>
    <source>
        <strain>IAI1</strain>
    </source>
</reference>
<accession>B7LZK9</accession>
<sequence>MSAIAPGMILIAYLCGSISSAILVCRLCGLPDPRTSGSGNPGATNVLRIGGKGAAVAVLIFDVLKGMLPVWGAYELGVSPFWLGLIAIAACLGHIWPVFFGFKGGKGVATAFGAIAPIGWDLTGVMAGTWLLTVLLSGYSSLGAIVSALIAPFYVWWFKPQFTFPVSMLSCLILLRHHDNIQRLWRRQETKIWTKFKRKREKDPE</sequence>
<proteinExistence type="inferred from homology"/>
<evidence type="ECO:0000255" key="1">
    <source>
        <dbReference type="HAMAP-Rule" id="MF_01043"/>
    </source>
</evidence>
<comment type="function">
    <text evidence="1">Catalyzes the transfer of an acyl group from acyl-ACP to glycerol-3-phosphate (G3P) to form lysophosphatidic acid (LPA). This enzyme can also utilize acyl-CoA as fatty acyl donor, but not acyl-PO(4).</text>
</comment>
<comment type="catalytic activity">
    <reaction evidence="1">
        <text>sn-glycerol 3-phosphate + an acyl-CoA = a 1-acyl-sn-glycero-3-phosphate + CoA</text>
        <dbReference type="Rhea" id="RHEA:15325"/>
        <dbReference type="ChEBI" id="CHEBI:57287"/>
        <dbReference type="ChEBI" id="CHEBI:57597"/>
        <dbReference type="ChEBI" id="CHEBI:57970"/>
        <dbReference type="ChEBI" id="CHEBI:58342"/>
        <dbReference type="EC" id="2.3.1.15"/>
    </reaction>
</comment>
<comment type="catalytic activity">
    <reaction evidence="1">
        <text>a fatty acyl-[ACP] + sn-glycerol 3-phosphate = a 1-acyl-sn-glycero-3-phosphate + holo-[ACP]</text>
        <dbReference type="Rhea" id="RHEA:42300"/>
        <dbReference type="Rhea" id="RHEA-COMP:9685"/>
        <dbReference type="Rhea" id="RHEA-COMP:14125"/>
        <dbReference type="ChEBI" id="CHEBI:57597"/>
        <dbReference type="ChEBI" id="CHEBI:57970"/>
        <dbReference type="ChEBI" id="CHEBI:64479"/>
        <dbReference type="ChEBI" id="CHEBI:138651"/>
        <dbReference type="EC" id="2.3.1.n5"/>
    </reaction>
</comment>
<comment type="pathway">
    <text evidence="1">Lipid metabolism; phospholipid metabolism.</text>
</comment>
<comment type="subunit">
    <text evidence="1">Probably interacts with PlsX.</text>
</comment>
<comment type="subcellular location">
    <subcellularLocation>
        <location evidence="1">Cell inner membrane</location>
        <topology evidence="1">Multi-pass membrane protein</topology>
    </subcellularLocation>
</comment>
<comment type="similarity">
    <text evidence="1">Belongs to the PlsY family.</text>
</comment>
<organism>
    <name type="scientific">Escherichia coli O8 (strain IAI1)</name>
    <dbReference type="NCBI Taxonomy" id="585034"/>
    <lineage>
        <taxon>Bacteria</taxon>
        <taxon>Pseudomonadati</taxon>
        <taxon>Pseudomonadota</taxon>
        <taxon>Gammaproteobacteria</taxon>
        <taxon>Enterobacterales</taxon>
        <taxon>Enterobacteriaceae</taxon>
        <taxon>Escherichia</taxon>
    </lineage>
</organism>
<dbReference type="EC" id="2.3.1.15" evidence="1"/>
<dbReference type="EC" id="2.3.1.n5" evidence="1"/>
<dbReference type="EMBL" id="CU928160">
    <property type="protein sequence ID" value="CAR00021.1"/>
    <property type="molecule type" value="Genomic_DNA"/>
</dbReference>
<dbReference type="RefSeq" id="WP_001272796.1">
    <property type="nucleotide sequence ID" value="NC_011741.1"/>
</dbReference>
<dbReference type="SMR" id="B7LZK9"/>
<dbReference type="GeneID" id="93778934"/>
<dbReference type="KEGG" id="ecr:ECIAI1_3207"/>
<dbReference type="HOGENOM" id="CLU_081254_0_2_6"/>
<dbReference type="UniPathway" id="UPA00085"/>
<dbReference type="GO" id="GO:0005886">
    <property type="term" value="C:plasma membrane"/>
    <property type="evidence" value="ECO:0007669"/>
    <property type="project" value="UniProtKB-SubCell"/>
</dbReference>
<dbReference type="GO" id="GO:0043772">
    <property type="term" value="F:acyl-phosphate glycerol-3-phosphate acyltransferase activity"/>
    <property type="evidence" value="ECO:0007669"/>
    <property type="project" value="InterPro"/>
</dbReference>
<dbReference type="GO" id="GO:0004366">
    <property type="term" value="F:glycerol-3-phosphate O-acyltransferase activity"/>
    <property type="evidence" value="ECO:0007669"/>
    <property type="project" value="UniProtKB-UniRule"/>
</dbReference>
<dbReference type="GO" id="GO:0008654">
    <property type="term" value="P:phospholipid biosynthetic process"/>
    <property type="evidence" value="ECO:0007669"/>
    <property type="project" value="UniProtKB-UniRule"/>
</dbReference>
<dbReference type="HAMAP" id="MF_01043">
    <property type="entry name" value="PlsY"/>
    <property type="match status" value="1"/>
</dbReference>
<dbReference type="InterPro" id="IPR003811">
    <property type="entry name" value="G3P_acylTferase_PlsY"/>
</dbReference>
<dbReference type="NCBIfam" id="TIGR00023">
    <property type="entry name" value="glycerol-3-phosphate 1-O-acyltransferase PlsY"/>
    <property type="match status" value="1"/>
</dbReference>
<dbReference type="PANTHER" id="PTHR30309:SF0">
    <property type="entry name" value="GLYCEROL-3-PHOSPHATE ACYLTRANSFERASE-RELATED"/>
    <property type="match status" value="1"/>
</dbReference>
<dbReference type="PANTHER" id="PTHR30309">
    <property type="entry name" value="INNER MEMBRANE PROTEIN YGIH"/>
    <property type="match status" value="1"/>
</dbReference>
<dbReference type="Pfam" id="PF02660">
    <property type="entry name" value="G3P_acyltransf"/>
    <property type="match status" value="1"/>
</dbReference>
<dbReference type="SMART" id="SM01207">
    <property type="entry name" value="G3P_acyltransf"/>
    <property type="match status" value="1"/>
</dbReference>
<feature type="chain" id="PRO_1000136084" description="Glycerol-3-phosphate acyltransferase">
    <location>
        <begin position="1"/>
        <end position="205"/>
    </location>
</feature>
<feature type="topological domain" description="Periplasmic" evidence="1">
    <location>
        <begin position="1"/>
        <end position="3"/>
    </location>
</feature>
<feature type="transmembrane region" description="Helical" evidence="1">
    <location>
        <begin position="4"/>
        <end position="24"/>
    </location>
</feature>
<feature type="topological domain" description="Cytoplasmic" evidence="1">
    <location>
        <begin position="25"/>
        <end position="52"/>
    </location>
</feature>
<feature type="transmembrane region" description="Helical" evidence="1">
    <location>
        <begin position="53"/>
        <end position="73"/>
    </location>
</feature>
<feature type="topological domain" description="Periplasmic" evidence="1">
    <location>
        <begin position="74"/>
        <end position="80"/>
    </location>
</feature>
<feature type="transmembrane region" description="Helical" evidence="1">
    <location>
        <begin position="81"/>
        <end position="101"/>
    </location>
</feature>
<feature type="topological domain" description="Cytoplasmic" evidence="1">
    <location>
        <begin position="102"/>
        <end position="111"/>
    </location>
</feature>
<feature type="transmembrane region" description="Helical" evidence="1">
    <location>
        <begin position="112"/>
        <end position="132"/>
    </location>
</feature>
<feature type="topological domain" description="Periplasmic" evidence="1">
    <location>
        <begin position="133"/>
        <end position="137"/>
    </location>
</feature>
<feature type="transmembrane region" description="Helical" evidence="1">
    <location>
        <begin position="138"/>
        <end position="158"/>
    </location>
</feature>
<feature type="topological domain" description="Cytoplasmic" evidence="1">
    <location>
        <begin position="159"/>
        <end position="205"/>
    </location>
</feature>
<name>PLSY_ECO8A</name>